<dbReference type="EMBL" id="CR382131">
    <property type="protein sequence ID" value="CAG79651.1"/>
    <property type="molecule type" value="Genomic_DNA"/>
</dbReference>
<dbReference type="RefSeq" id="XP_504058.1">
    <property type="nucleotide sequence ID" value="XM_504058.1"/>
</dbReference>
<dbReference type="SMR" id="Q6C5K4"/>
<dbReference type="FunCoup" id="Q6C5K4">
    <property type="interactions" value="219"/>
</dbReference>
<dbReference type="STRING" id="284591.Q6C5K4"/>
<dbReference type="EnsemblFungi" id="CAG79651">
    <property type="protein sequence ID" value="CAG79651"/>
    <property type="gene ID" value="YALI0_E17325g"/>
</dbReference>
<dbReference type="KEGG" id="yli:2911665"/>
<dbReference type="VEuPathDB" id="FungiDB:YALI0_E17325g"/>
<dbReference type="HOGENOM" id="CLU_024459_1_0_1"/>
<dbReference type="InParanoid" id="Q6C5K4"/>
<dbReference type="OMA" id="DWTQISI"/>
<dbReference type="OrthoDB" id="99291at4891"/>
<dbReference type="Proteomes" id="UP000001300">
    <property type="component" value="Chromosome E"/>
</dbReference>
<dbReference type="GO" id="GO:0005737">
    <property type="term" value="C:cytoplasm"/>
    <property type="evidence" value="ECO:0007669"/>
    <property type="project" value="UniProtKB-SubCell"/>
</dbReference>
<dbReference type="GO" id="GO:0005634">
    <property type="term" value="C:nucleus"/>
    <property type="evidence" value="ECO:0007669"/>
    <property type="project" value="UniProtKB-SubCell"/>
</dbReference>
<dbReference type="GO" id="GO:0004865">
    <property type="term" value="F:protein serine/threonine phosphatase inhibitor activity"/>
    <property type="evidence" value="ECO:0000318"/>
    <property type="project" value="GO_Central"/>
</dbReference>
<dbReference type="GO" id="GO:0042149">
    <property type="term" value="P:cellular response to glucose starvation"/>
    <property type="evidence" value="ECO:0000318"/>
    <property type="project" value="GO_Central"/>
</dbReference>
<dbReference type="GO" id="GO:0030071">
    <property type="term" value="P:regulation of mitotic metaphase/anaphase transition"/>
    <property type="evidence" value="ECO:0007669"/>
    <property type="project" value="InterPro"/>
</dbReference>
<dbReference type="CDD" id="cd02205">
    <property type="entry name" value="CBS_pair_SF"/>
    <property type="match status" value="2"/>
</dbReference>
<dbReference type="Gene3D" id="3.10.580.10">
    <property type="entry name" value="CBS-domain"/>
    <property type="match status" value="2"/>
</dbReference>
<dbReference type="InterPro" id="IPR050511">
    <property type="entry name" value="AMPK_gamma/SDS23_families"/>
</dbReference>
<dbReference type="InterPro" id="IPR000644">
    <property type="entry name" value="CBS_dom"/>
</dbReference>
<dbReference type="InterPro" id="IPR046342">
    <property type="entry name" value="CBS_dom_sf"/>
</dbReference>
<dbReference type="InterPro" id="IPR016711">
    <property type="entry name" value="Ssd23"/>
</dbReference>
<dbReference type="PANTHER" id="PTHR13780">
    <property type="entry name" value="AMP-ACTIVATED PROTEIN KINASE, GAMMA REGULATORY SUBUNIT"/>
    <property type="match status" value="1"/>
</dbReference>
<dbReference type="PANTHER" id="PTHR13780:SF36">
    <property type="entry name" value="CBS DOMAIN-CONTAINING PROTEIN"/>
    <property type="match status" value="1"/>
</dbReference>
<dbReference type="Pfam" id="PF00571">
    <property type="entry name" value="CBS"/>
    <property type="match status" value="2"/>
</dbReference>
<dbReference type="PIRSF" id="PIRSF018148">
    <property type="entry name" value="UCP018148_CBS_YBR214w"/>
    <property type="match status" value="1"/>
</dbReference>
<dbReference type="SMART" id="SM00116">
    <property type="entry name" value="CBS"/>
    <property type="match status" value="4"/>
</dbReference>
<dbReference type="SUPFAM" id="SSF54631">
    <property type="entry name" value="CBS-domain pair"/>
    <property type="match status" value="2"/>
</dbReference>
<dbReference type="PROSITE" id="PS51371">
    <property type="entry name" value="CBS"/>
    <property type="match status" value="4"/>
</dbReference>
<keyword id="KW-0129">CBS domain</keyword>
<keyword id="KW-0963">Cytoplasm</keyword>
<keyword id="KW-0539">Nucleus</keyword>
<keyword id="KW-1185">Reference proteome</keyword>
<keyword id="KW-0677">Repeat</keyword>
<accession>Q6C5K4</accession>
<organism>
    <name type="scientific">Yarrowia lipolytica (strain CLIB 122 / E 150)</name>
    <name type="common">Yeast</name>
    <name type="synonym">Candida lipolytica</name>
    <dbReference type="NCBI Taxonomy" id="284591"/>
    <lineage>
        <taxon>Eukaryota</taxon>
        <taxon>Fungi</taxon>
        <taxon>Dikarya</taxon>
        <taxon>Ascomycota</taxon>
        <taxon>Saccharomycotina</taxon>
        <taxon>Dipodascomycetes</taxon>
        <taxon>Dipodascales</taxon>
        <taxon>Dipodascales incertae sedis</taxon>
        <taxon>Yarrowia</taxon>
    </lineage>
</organism>
<protein>
    <recommendedName>
        <fullName>Protein SDS23</fullName>
    </recommendedName>
</protein>
<evidence type="ECO:0000250" key="1"/>
<evidence type="ECO:0000255" key="2">
    <source>
        <dbReference type="PROSITE-ProRule" id="PRU00703"/>
    </source>
</evidence>
<evidence type="ECO:0000256" key="3">
    <source>
        <dbReference type="SAM" id="MobiDB-lite"/>
    </source>
</evidence>
<evidence type="ECO:0000305" key="4"/>
<feature type="chain" id="PRO_0000324962" description="Protein SDS23">
    <location>
        <begin position="1"/>
        <end position="505"/>
    </location>
</feature>
<feature type="domain" description="CBS 1" evidence="2">
    <location>
        <begin position="132"/>
        <end position="195"/>
    </location>
</feature>
<feature type="domain" description="CBS 2" evidence="2">
    <location>
        <begin position="225"/>
        <end position="282"/>
    </location>
</feature>
<feature type="domain" description="CBS 3" evidence="2">
    <location>
        <begin position="302"/>
        <end position="360"/>
    </location>
</feature>
<feature type="domain" description="CBS 4" evidence="2">
    <location>
        <begin position="382"/>
        <end position="468"/>
    </location>
</feature>
<feature type="region of interest" description="Disordered" evidence="3">
    <location>
        <begin position="1"/>
        <end position="70"/>
    </location>
</feature>
<feature type="region of interest" description="Disordered" evidence="3">
    <location>
        <begin position="85"/>
        <end position="104"/>
    </location>
</feature>
<feature type="region of interest" description="Disordered" evidence="3">
    <location>
        <begin position="414"/>
        <end position="441"/>
    </location>
</feature>
<feature type="region of interest" description="Disordered" evidence="3">
    <location>
        <begin position="464"/>
        <end position="505"/>
    </location>
</feature>
<feature type="compositionally biased region" description="Low complexity" evidence="3">
    <location>
        <begin position="15"/>
        <end position="40"/>
    </location>
</feature>
<feature type="compositionally biased region" description="Low complexity" evidence="3">
    <location>
        <begin position="481"/>
        <end position="490"/>
    </location>
</feature>
<feature type="compositionally biased region" description="Basic and acidic residues" evidence="3">
    <location>
        <begin position="493"/>
        <end position="505"/>
    </location>
</feature>
<name>SDS23_YARLI</name>
<reference key="1">
    <citation type="journal article" date="2004" name="Nature">
        <title>Genome evolution in yeasts.</title>
        <authorList>
            <person name="Dujon B."/>
            <person name="Sherman D."/>
            <person name="Fischer G."/>
            <person name="Durrens P."/>
            <person name="Casaregola S."/>
            <person name="Lafontaine I."/>
            <person name="de Montigny J."/>
            <person name="Marck C."/>
            <person name="Neuveglise C."/>
            <person name="Talla E."/>
            <person name="Goffard N."/>
            <person name="Frangeul L."/>
            <person name="Aigle M."/>
            <person name="Anthouard V."/>
            <person name="Babour A."/>
            <person name="Barbe V."/>
            <person name="Barnay S."/>
            <person name="Blanchin S."/>
            <person name="Beckerich J.-M."/>
            <person name="Beyne E."/>
            <person name="Bleykasten C."/>
            <person name="Boisrame A."/>
            <person name="Boyer J."/>
            <person name="Cattolico L."/>
            <person name="Confanioleri F."/>
            <person name="de Daruvar A."/>
            <person name="Despons L."/>
            <person name="Fabre E."/>
            <person name="Fairhead C."/>
            <person name="Ferry-Dumazet H."/>
            <person name="Groppi A."/>
            <person name="Hantraye F."/>
            <person name="Hennequin C."/>
            <person name="Jauniaux N."/>
            <person name="Joyet P."/>
            <person name="Kachouri R."/>
            <person name="Kerrest A."/>
            <person name="Koszul R."/>
            <person name="Lemaire M."/>
            <person name="Lesur I."/>
            <person name="Ma L."/>
            <person name="Muller H."/>
            <person name="Nicaud J.-M."/>
            <person name="Nikolski M."/>
            <person name="Oztas S."/>
            <person name="Ozier-Kalogeropoulos O."/>
            <person name="Pellenz S."/>
            <person name="Potier S."/>
            <person name="Richard G.-F."/>
            <person name="Straub M.-L."/>
            <person name="Suleau A."/>
            <person name="Swennen D."/>
            <person name="Tekaia F."/>
            <person name="Wesolowski-Louvel M."/>
            <person name="Westhof E."/>
            <person name="Wirth B."/>
            <person name="Zeniou-Meyer M."/>
            <person name="Zivanovic Y."/>
            <person name="Bolotin-Fukuhara M."/>
            <person name="Thierry A."/>
            <person name="Bouchier C."/>
            <person name="Caudron B."/>
            <person name="Scarpelli C."/>
            <person name="Gaillardin C."/>
            <person name="Weissenbach J."/>
            <person name="Wincker P."/>
            <person name="Souciet J.-L."/>
        </authorList>
    </citation>
    <scope>NUCLEOTIDE SEQUENCE [LARGE SCALE GENOMIC DNA]</scope>
    <source>
        <strain>CLIB 122 / E 150</strain>
    </source>
</reference>
<sequence>MDKENASVEKAPTTPSLAVPAPSQASPQSPQAALSPSNSSIQATFARARKGSHASQMERPNNRDFAIPASPTVGESSIAELVTAPPAVTPSRSRSSSAASNNQAAMSPVFPAYDDSNAKHYRRWEDDRLDLMVQPDKLVFVEGDTPVEKAFDKLVENHFTSLPVRTAPEHKSVSHSFDYADLNAYLLLVMGYVDAADTTPEALENVKKARSGQPVPVNFVAGLGAKDPFICVPRDSTLATAVEILGSGVHRFAVTEGPASDAVIGILSQRRTVRYIWENGRLFKTLEPLFQTPLTDLGLAQPNPNVLTIGGDEYVIAALRKMNAQNVSSLAVVDASNNLLGNISVVDVRLVSKSSQSHLLKATCAHFLSVILNARGLEDGKDSFPVFHVTPQTSYGRTIAKMVATNAHRLWVVQPDVPSPQPSTPSGQPASKTHGPSHHAAHNGKLIGVVSLTDILNVLGRHAGNSDLDPHFARRNRRRSSSSSVRSRSSYEQFRRSISIDRGQR</sequence>
<proteinExistence type="inferred from homology"/>
<comment type="function">
    <text evidence="1">Involved in DNA replication and cell separation.</text>
</comment>
<comment type="subcellular location">
    <subcellularLocation>
        <location evidence="1">Cytoplasm</location>
    </subcellularLocation>
    <subcellularLocation>
        <location evidence="1">Nucleus</location>
    </subcellularLocation>
</comment>
<comment type="similarity">
    <text evidence="4">Belongs to the SDS23 family.</text>
</comment>
<gene>
    <name type="primary">SDS23</name>
    <name type="ordered locus">YALI0E17325g</name>
</gene>